<protein>
    <recommendedName>
        <fullName evidence="1">Peptide deformylase</fullName>
        <shortName evidence="1">PDF</shortName>
        <ecNumber evidence="1">3.5.1.88</ecNumber>
    </recommendedName>
    <alternativeName>
        <fullName evidence="1">Polypeptide deformylase</fullName>
    </alternativeName>
</protein>
<sequence>MYRIRVFGDPVLRKRAKPVTKFDDNLKKTIERMIETMYHYDGVGLAAPQVGISQRFFVMDVGNGPVAVINPEILEIDPETEVAEEGCLSFPEIFVEIERSKRIKVKYQNTRGEYVEEELEGYAARVFQHEFDHLNGVLIIDRISPAKRLLLRKKLMDIARTVKR</sequence>
<organism>
    <name type="scientific">Thermotoga sp. (strain RQ2)</name>
    <dbReference type="NCBI Taxonomy" id="126740"/>
    <lineage>
        <taxon>Bacteria</taxon>
        <taxon>Thermotogati</taxon>
        <taxon>Thermotogota</taxon>
        <taxon>Thermotogae</taxon>
        <taxon>Thermotogales</taxon>
        <taxon>Thermotogaceae</taxon>
        <taxon>Thermotoga</taxon>
    </lineage>
</organism>
<name>DEF_THESQ</name>
<gene>
    <name evidence="1" type="primary">def</name>
    <name type="ordered locus">TRQ2_1168</name>
</gene>
<feature type="chain" id="PRO_1000097355" description="Peptide deformylase">
    <location>
        <begin position="1"/>
        <end position="164"/>
    </location>
</feature>
<feature type="active site" evidence="1">
    <location>
        <position position="130"/>
    </location>
</feature>
<feature type="binding site" evidence="1">
    <location>
        <position position="87"/>
    </location>
    <ligand>
        <name>Fe cation</name>
        <dbReference type="ChEBI" id="CHEBI:24875"/>
    </ligand>
</feature>
<feature type="binding site" evidence="1">
    <location>
        <position position="129"/>
    </location>
    <ligand>
        <name>Fe cation</name>
        <dbReference type="ChEBI" id="CHEBI:24875"/>
    </ligand>
</feature>
<feature type="binding site" evidence="1">
    <location>
        <position position="133"/>
    </location>
    <ligand>
        <name>Fe cation</name>
        <dbReference type="ChEBI" id="CHEBI:24875"/>
    </ligand>
</feature>
<comment type="function">
    <text evidence="1">Removes the formyl group from the N-terminal Met of newly synthesized proteins. Requires at least a dipeptide for an efficient rate of reaction. N-terminal L-methionine is a prerequisite for activity but the enzyme has broad specificity at other positions.</text>
</comment>
<comment type="catalytic activity">
    <reaction evidence="1">
        <text>N-terminal N-formyl-L-methionyl-[peptide] + H2O = N-terminal L-methionyl-[peptide] + formate</text>
        <dbReference type="Rhea" id="RHEA:24420"/>
        <dbReference type="Rhea" id="RHEA-COMP:10639"/>
        <dbReference type="Rhea" id="RHEA-COMP:10640"/>
        <dbReference type="ChEBI" id="CHEBI:15377"/>
        <dbReference type="ChEBI" id="CHEBI:15740"/>
        <dbReference type="ChEBI" id="CHEBI:49298"/>
        <dbReference type="ChEBI" id="CHEBI:64731"/>
        <dbReference type="EC" id="3.5.1.88"/>
    </reaction>
</comment>
<comment type="cofactor">
    <cofactor evidence="1">
        <name>Fe(2+)</name>
        <dbReference type="ChEBI" id="CHEBI:29033"/>
    </cofactor>
    <text evidence="1">Binds 1 Fe(2+) ion.</text>
</comment>
<comment type="similarity">
    <text evidence="1">Belongs to the polypeptide deformylase family.</text>
</comment>
<evidence type="ECO:0000255" key="1">
    <source>
        <dbReference type="HAMAP-Rule" id="MF_00163"/>
    </source>
</evidence>
<accession>B1LB14</accession>
<keyword id="KW-0378">Hydrolase</keyword>
<keyword id="KW-0408">Iron</keyword>
<keyword id="KW-0479">Metal-binding</keyword>
<keyword id="KW-0648">Protein biosynthesis</keyword>
<proteinExistence type="inferred from homology"/>
<dbReference type="EC" id="3.5.1.88" evidence="1"/>
<dbReference type="EMBL" id="CP000969">
    <property type="protein sequence ID" value="ACB09512.1"/>
    <property type="molecule type" value="Genomic_DNA"/>
</dbReference>
<dbReference type="RefSeq" id="WP_012310990.1">
    <property type="nucleotide sequence ID" value="NC_010483.1"/>
</dbReference>
<dbReference type="SMR" id="B1LB14"/>
<dbReference type="KEGG" id="trq:TRQ2_1168"/>
<dbReference type="HOGENOM" id="CLU_061901_4_2_0"/>
<dbReference type="Proteomes" id="UP000001687">
    <property type="component" value="Chromosome"/>
</dbReference>
<dbReference type="GO" id="GO:0046872">
    <property type="term" value="F:metal ion binding"/>
    <property type="evidence" value="ECO:0007669"/>
    <property type="project" value="UniProtKB-KW"/>
</dbReference>
<dbReference type="GO" id="GO:0042586">
    <property type="term" value="F:peptide deformylase activity"/>
    <property type="evidence" value="ECO:0007669"/>
    <property type="project" value="UniProtKB-UniRule"/>
</dbReference>
<dbReference type="GO" id="GO:0043686">
    <property type="term" value="P:co-translational protein modification"/>
    <property type="evidence" value="ECO:0007669"/>
    <property type="project" value="TreeGrafter"/>
</dbReference>
<dbReference type="GO" id="GO:0006412">
    <property type="term" value="P:translation"/>
    <property type="evidence" value="ECO:0007669"/>
    <property type="project" value="UniProtKB-UniRule"/>
</dbReference>
<dbReference type="CDD" id="cd00487">
    <property type="entry name" value="Pep_deformylase"/>
    <property type="match status" value="1"/>
</dbReference>
<dbReference type="FunFam" id="3.90.45.10:FF:000013">
    <property type="entry name" value="Peptide deformylase"/>
    <property type="match status" value="1"/>
</dbReference>
<dbReference type="Gene3D" id="3.90.45.10">
    <property type="entry name" value="Peptide deformylase"/>
    <property type="match status" value="1"/>
</dbReference>
<dbReference type="HAMAP" id="MF_00163">
    <property type="entry name" value="Pep_deformylase"/>
    <property type="match status" value="1"/>
</dbReference>
<dbReference type="InterPro" id="IPR023635">
    <property type="entry name" value="Peptide_deformylase"/>
</dbReference>
<dbReference type="InterPro" id="IPR036821">
    <property type="entry name" value="Peptide_deformylase_sf"/>
</dbReference>
<dbReference type="NCBIfam" id="TIGR00079">
    <property type="entry name" value="pept_deformyl"/>
    <property type="match status" value="1"/>
</dbReference>
<dbReference type="NCBIfam" id="NF001159">
    <property type="entry name" value="PRK00150.1-3"/>
    <property type="match status" value="1"/>
</dbReference>
<dbReference type="PANTHER" id="PTHR10458">
    <property type="entry name" value="PEPTIDE DEFORMYLASE"/>
    <property type="match status" value="1"/>
</dbReference>
<dbReference type="PANTHER" id="PTHR10458:SF22">
    <property type="entry name" value="PEPTIDE DEFORMYLASE"/>
    <property type="match status" value="1"/>
</dbReference>
<dbReference type="Pfam" id="PF01327">
    <property type="entry name" value="Pep_deformylase"/>
    <property type="match status" value="1"/>
</dbReference>
<dbReference type="PIRSF" id="PIRSF004749">
    <property type="entry name" value="Pep_def"/>
    <property type="match status" value="1"/>
</dbReference>
<dbReference type="PRINTS" id="PR01576">
    <property type="entry name" value="PDEFORMYLASE"/>
</dbReference>
<dbReference type="SUPFAM" id="SSF56420">
    <property type="entry name" value="Peptide deformylase"/>
    <property type="match status" value="1"/>
</dbReference>
<reference key="1">
    <citation type="journal article" date="2011" name="J. Bacteriol.">
        <title>Genome sequence of Thermotoga sp. strain RQ2, a hyperthermophilic bacterium isolated from a geothermally heated region of the seafloor near Ribeira Quente, the Azores.</title>
        <authorList>
            <person name="Swithers K.S."/>
            <person name="DiPippo J.L."/>
            <person name="Bruce D.C."/>
            <person name="Detter C."/>
            <person name="Tapia R."/>
            <person name="Han S."/>
            <person name="Saunders E."/>
            <person name="Goodwin L.A."/>
            <person name="Han J."/>
            <person name="Woyke T."/>
            <person name="Pitluck S."/>
            <person name="Pennacchio L."/>
            <person name="Nolan M."/>
            <person name="Mikhailova N."/>
            <person name="Lykidis A."/>
            <person name="Land M.L."/>
            <person name="Brettin T."/>
            <person name="Stetter K.O."/>
            <person name="Nelson K.E."/>
            <person name="Gogarten J.P."/>
            <person name="Noll K.M."/>
        </authorList>
    </citation>
    <scope>NUCLEOTIDE SEQUENCE [LARGE SCALE GENOMIC DNA]</scope>
    <source>
        <strain>RQ2</strain>
    </source>
</reference>